<keyword id="KW-0963">Cytoplasm</keyword>
<keyword id="KW-0269">Exonuclease</keyword>
<keyword id="KW-0378">Hydrolase</keyword>
<keyword id="KW-0540">Nuclease</keyword>
<keyword id="KW-1185">Reference proteome</keyword>
<feature type="chain" id="PRO_1000048772" description="Exodeoxyribonuclease 7 large subunit">
    <location>
        <begin position="1"/>
        <end position="457"/>
    </location>
</feature>
<comment type="function">
    <text evidence="1">Bidirectionally degrades single-stranded DNA into large acid-insoluble oligonucleotides, which are then degraded further into small acid-soluble oligonucleotides.</text>
</comment>
<comment type="catalytic activity">
    <reaction evidence="1">
        <text>Exonucleolytic cleavage in either 5'- to 3'- or 3'- to 5'-direction to yield nucleoside 5'-phosphates.</text>
        <dbReference type="EC" id="3.1.11.6"/>
    </reaction>
</comment>
<comment type="subunit">
    <text evidence="1">Heterooligomer composed of large and small subunits.</text>
</comment>
<comment type="subcellular location">
    <subcellularLocation>
        <location evidence="1">Cytoplasm</location>
    </subcellularLocation>
</comment>
<comment type="similarity">
    <text evidence="1">Belongs to the XseA family.</text>
</comment>
<reference key="1">
    <citation type="journal article" date="2010" name="PLoS ONE">
        <title>Genome sequence of Cronobacter sakazakii BAA-894 and comparative genomic hybridization analysis with other Cronobacter species.</title>
        <authorList>
            <person name="Kucerova E."/>
            <person name="Clifton S.W."/>
            <person name="Xia X.Q."/>
            <person name="Long F."/>
            <person name="Porwollik S."/>
            <person name="Fulton L."/>
            <person name="Fronick C."/>
            <person name="Minx P."/>
            <person name="Kyung K."/>
            <person name="Warren W."/>
            <person name="Fulton R."/>
            <person name="Feng D."/>
            <person name="Wollam A."/>
            <person name="Shah N."/>
            <person name="Bhonagiri V."/>
            <person name="Nash W.E."/>
            <person name="Hallsworth-Pepin K."/>
            <person name="Wilson R.K."/>
            <person name="McClelland M."/>
            <person name="Forsythe S.J."/>
        </authorList>
    </citation>
    <scope>NUCLEOTIDE SEQUENCE [LARGE SCALE GENOMIC DNA]</scope>
    <source>
        <strain>ATCC BAA-894</strain>
    </source>
</reference>
<name>EX7L_CROS8</name>
<sequence length="457" mass="51656">MPLTQTPSIFTVSRLNQSVRLLLEQEMGQVWISGEISNFTQPASGHWYFTLKDDTAQVRCAMFRNSNRRVTFRPQHGQQVLVRANITLYEPRGDYQIIVESMQPAGEGLLQQRYEQLKQQLAAEGLFDPALKKPLPSPARQVGVITSKTGAALHDVLNVLRRRDPSLPVVIYPTAVQGDDAPAQIVRAIELANLRDECDVLIVGRGGGSLEDLWSFNDERVARAIFASRIPIVSAVGHETDVTIADFVADLRAPTPSAAAEIVSRNQLELLRQVQALQQRLEMAMDYSLANRQQRFTRLHHRLEQQHPQLRLARQQTLLMRLRQRMDNALDSRMRHATQRQTRLMQRLNQQQPLPRLHRASARVQQLEYRLGQIVAARLSHTRERFGNAITHLEAVSPLATLARGYSVTTAQDGNVLKATKQVRPGDTLTTRLADGWVESEVRQITPAKKTRKKKTG</sequence>
<evidence type="ECO:0000255" key="1">
    <source>
        <dbReference type="HAMAP-Rule" id="MF_00378"/>
    </source>
</evidence>
<gene>
    <name evidence="1" type="primary">xseA</name>
    <name type="ordered locus">ESA_00753</name>
</gene>
<proteinExistence type="inferred from homology"/>
<dbReference type="EC" id="3.1.11.6" evidence="1"/>
<dbReference type="EMBL" id="CP000783">
    <property type="protein sequence ID" value="ABU76030.1"/>
    <property type="molecule type" value="Genomic_DNA"/>
</dbReference>
<dbReference type="RefSeq" id="WP_012124055.1">
    <property type="nucleotide sequence ID" value="NC_009778.1"/>
</dbReference>
<dbReference type="SMR" id="A7MGV1"/>
<dbReference type="KEGG" id="esa:ESA_00753"/>
<dbReference type="PATRIC" id="fig|290339.8.peg.666"/>
<dbReference type="HOGENOM" id="CLU_023625_3_1_6"/>
<dbReference type="Proteomes" id="UP000000260">
    <property type="component" value="Chromosome"/>
</dbReference>
<dbReference type="GO" id="GO:0005737">
    <property type="term" value="C:cytoplasm"/>
    <property type="evidence" value="ECO:0007669"/>
    <property type="project" value="UniProtKB-SubCell"/>
</dbReference>
<dbReference type="GO" id="GO:0009318">
    <property type="term" value="C:exodeoxyribonuclease VII complex"/>
    <property type="evidence" value="ECO:0007669"/>
    <property type="project" value="InterPro"/>
</dbReference>
<dbReference type="GO" id="GO:0008855">
    <property type="term" value="F:exodeoxyribonuclease VII activity"/>
    <property type="evidence" value="ECO:0007669"/>
    <property type="project" value="UniProtKB-UniRule"/>
</dbReference>
<dbReference type="GO" id="GO:0003676">
    <property type="term" value="F:nucleic acid binding"/>
    <property type="evidence" value="ECO:0007669"/>
    <property type="project" value="InterPro"/>
</dbReference>
<dbReference type="GO" id="GO:0006308">
    <property type="term" value="P:DNA catabolic process"/>
    <property type="evidence" value="ECO:0007669"/>
    <property type="project" value="UniProtKB-UniRule"/>
</dbReference>
<dbReference type="CDD" id="cd04489">
    <property type="entry name" value="ExoVII_LU_OBF"/>
    <property type="match status" value="1"/>
</dbReference>
<dbReference type="HAMAP" id="MF_00378">
    <property type="entry name" value="Exonuc_7_L"/>
    <property type="match status" value="1"/>
</dbReference>
<dbReference type="InterPro" id="IPR003753">
    <property type="entry name" value="Exonuc_VII_L"/>
</dbReference>
<dbReference type="InterPro" id="IPR020579">
    <property type="entry name" value="Exonuc_VII_lsu_C"/>
</dbReference>
<dbReference type="InterPro" id="IPR025824">
    <property type="entry name" value="OB-fold_nuc-bd_dom"/>
</dbReference>
<dbReference type="NCBIfam" id="TIGR00237">
    <property type="entry name" value="xseA"/>
    <property type="match status" value="1"/>
</dbReference>
<dbReference type="PANTHER" id="PTHR30008">
    <property type="entry name" value="EXODEOXYRIBONUCLEASE 7 LARGE SUBUNIT"/>
    <property type="match status" value="1"/>
</dbReference>
<dbReference type="PANTHER" id="PTHR30008:SF0">
    <property type="entry name" value="EXODEOXYRIBONUCLEASE 7 LARGE SUBUNIT"/>
    <property type="match status" value="1"/>
</dbReference>
<dbReference type="Pfam" id="PF02601">
    <property type="entry name" value="Exonuc_VII_L"/>
    <property type="match status" value="1"/>
</dbReference>
<dbReference type="Pfam" id="PF13742">
    <property type="entry name" value="tRNA_anti_2"/>
    <property type="match status" value="1"/>
</dbReference>
<protein>
    <recommendedName>
        <fullName evidence="1">Exodeoxyribonuclease 7 large subunit</fullName>
        <ecNumber evidence="1">3.1.11.6</ecNumber>
    </recommendedName>
    <alternativeName>
        <fullName evidence="1">Exodeoxyribonuclease VII large subunit</fullName>
        <shortName evidence="1">Exonuclease VII large subunit</shortName>
    </alternativeName>
</protein>
<accession>A7MGV1</accession>
<organism>
    <name type="scientific">Cronobacter sakazakii (strain ATCC BAA-894)</name>
    <name type="common">Enterobacter sakazakii</name>
    <dbReference type="NCBI Taxonomy" id="290339"/>
    <lineage>
        <taxon>Bacteria</taxon>
        <taxon>Pseudomonadati</taxon>
        <taxon>Pseudomonadota</taxon>
        <taxon>Gammaproteobacteria</taxon>
        <taxon>Enterobacterales</taxon>
        <taxon>Enterobacteriaceae</taxon>
        <taxon>Cronobacter</taxon>
    </lineage>
</organism>